<name>QUEC_BACCR</name>
<evidence type="ECO:0000255" key="1">
    <source>
        <dbReference type="HAMAP-Rule" id="MF_01633"/>
    </source>
</evidence>
<gene>
    <name evidence="1" type="primary">queC</name>
    <name type="ordered locus">BC_1341</name>
</gene>
<reference key="1">
    <citation type="journal article" date="2003" name="Nature">
        <title>Genome sequence of Bacillus cereus and comparative analysis with Bacillus anthracis.</title>
        <authorList>
            <person name="Ivanova N."/>
            <person name="Sorokin A."/>
            <person name="Anderson I."/>
            <person name="Galleron N."/>
            <person name="Candelon B."/>
            <person name="Kapatral V."/>
            <person name="Bhattacharyya A."/>
            <person name="Reznik G."/>
            <person name="Mikhailova N."/>
            <person name="Lapidus A."/>
            <person name="Chu L."/>
            <person name="Mazur M."/>
            <person name="Goltsman E."/>
            <person name="Larsen N."/>
            <person name="D'Souza M."/>
            <person name="Walunas T."/>
            <person name="Grechkin Y."/>
            <person name="Pusch G."/>
            <person name="Haselkorn R."/>
            <person name="Fonstein M."/>
            <person name="Ehrlich S.D."/>
            <person name="Overbeek R."/>
            <person name="Kyrpides N.C."/>
        </authorList>
    </citation>
    <scope>NUCLEOTIDE SEQUENCE [LARGE SCALE GENOMIC DNA]</scope>
    <source>
        <strain>ATCC 14579 / DSM 31 / CCUG 7414 / JCM 2152 / NBRC 15305 / NCIMB 9373 / NCTC 2599 / NRRL B-3711</strain>
    </source>
</reference>
<protein>
    <recommendedName>
        <fullName evidence="1">7-cyano-7-deazaguanine synthase</fullName>
        <ecNumber evidence="1">6.3.4.20</ecNumber>
    </recommendedName>
    <alternativeName>
        <fullName evidence="1">7-cyano-7-carbaguanine synthase</fullName>
    </alternativeName>
    <alternativeName>
        <fullName evidence="1">PreQ(0) synthase</fullName>
    </alternativeName>
    <alternativeName>
        <fullName evidence="1">Queuosine biosynthesis protein QueC</fullName>
    </alternativeName>
</protein>
<sequence length="220" mass="24540">MKKEKAVVVFSGGQDSTTCLFWAIEQFAEVEAVTFNYNQRHKLEIDCAAEIAKELGIKHTVLDMSLLNQLAPNALTRTDMEITHEEGELPSTFVDGRNLLFLSFAAVLAKQVGARHIVTGVCETDFSGYPDCRDVFVKSLNVTLNLSMDYPFVIHTPLMWIDKAETWKLSDELGAFEFVREKTLTCYNGIIGDGCGECPACQLRKAGLDTYLQEREGANN</sequence>
<keyword id="KW-0067">ATP-binding</keyword>
<keyword id="KW-0436">Ligase</keyword>
<keyword id="KW-0479">Metal-binding</keyword>
<keyword id="KW-0547">Nucleotide-binding</keyword>
<keyword id="KW-0671">Queuosine biosynthesis</keyword>
<keyword id="KW-1185">Reference proteome</keyword>
<keyword id="KW-0862">Zinc</keyword>
<dbReference type="EC" id="6.3.4.20" evidence="1"/>
<dbReference type="EMBL" id="AE016877">
    <property type="protein sequence ID" value="AAP08323.1"/>
    <property type="molecule type" value="Genomic_DNA"/>
</dbReference>
<dbReference type="RefSeq" id="NP_831122.1">
    <property type="nucleotide sequence ID" value="NC_004722.1"/>
</dbReference>
<dbReference type="RefSeq" id="WP_000711595.1">
    <property type="nucleotide sequence ID" value="NZ_CP138336.1"/>
</dbReference>
<dbReference type="SMR" id="Q81G69"/>
<dbReference type="STRING" id="226900.BC_1341"/>
<dbReference type="GeneID" id="83634954"/>
<dbReference type="KEGG" id="bce:BC1341"/>
<dbReference type="PATRIC" id="fig|226900.8.peg.1317"/>
<dbReference type="HOGENOM" id="CLU_081854_0_0_9"/>
<dbReference type="OrthoDB" id="9789567at2"/>
<dbReference type="UniPathway" id="UPA00391"/>
<dbReference type="Proteomes" id="UP000001417">
    <property type="component" value="Chromosome"/>
</dbReference>
<dbReference type="GO" id="GO:0005524">
    <property type="term" value="F:ATP binding"/>
    <property type="evidence" value="ECO:0007669"/>
    <property type="project" value="UniProtKB-UniRule"/>
</dbReference>
<dbReference type="GO" id="GO:0016879">
    <property type="term" value="F:ligase activity, forming carbon-nitrogen bonds"/>
    <property type="evidence" value="ECO:0007669"/>
    <property type="project" value="UniProtKB-UniRule"/>
</dbReference>
<dbReference type="GO" id="GO:0008270">
    <property type="term" value="F:zinc ion binding"/>
    <property type="evidence" value="ECO:0007669"/>
    <property type="project" value="UniProtKB-UniRule"/>
</dbReference>
<dbReference type="GO" id="GO:0008616">
    <property type="term" value="P:queuosine biosynthetic process"/>
    <property type="evidence" value="ECO:0007669"/>
    <property type="project" value="UniProtKB-UniRule"/>
</dbReference>
<dbReference type="CDD" id="cd01995">
    <property type="entry name" value="QueC-like"/>
    <property type="match status" value="1"/>
</dbReference>
<dbReference type="FunFam" id="3.40.50.620:FF:000017">
    <property type="entry name" value="7-cyano-7-deazaguanine synthase"/>
    <property type="match status" value="1"/>
</dbReference>
<dbReference type="Gene3D" id="3.40.50.620">
    <property type="entry name" value="HUPs"/>
    <property type="match status" value="1"/>
</dbReference>
<dbReference type="HAMAP" id="MF_01633">
    <property type="entry name" value="QueC"/>
    <property type="match status" value="1"/>
</dbReference>
<dbReference type="InterPro" id="IPR018317">
    <property type="entry name" value="QueC"/>
</dbReference>
<dbReference type="InterPro" id="IPR014729">
    <property type="entry name" value="Rossmann-like_a/b/a_fold"/>
</dbReference>
<dbReference type="NCBIfam" id="TIGR00364">
    <property type="entry name" value="7-cyano-7-deazaguanine synthase QueC"/>
    <property type="match status" value="1"/>
</dbReference>
<dbReference type="PANTHER" id="PTHR42914">
    <property type="entry name" value="7-CYANO-7-DEAZAGUANINE SYNTHASE"/>
    <property type="match status" value="1"/>
</dbReference>
<dbReference type="PANTHER" id="PTHR42914:SF1">
    <property type="entry name" value="7-CYANO-7-DEAZAGUANINE SYNTHASE"/>
    <property type="match status" value="1"/>
</dbReference>
<dbReference type="Pfam" id="PF06508">
    <property type="entry name" value="QueC"/>
    <property type="match status" value="1"/>
</dbReference>
<dbReference type="PIRSF" id="PIRSF006293">
    <property type="entry name" value="ExsB"/>
    <property type="match status" value="1"/>
</dbReference>
<dbReference type="SUPFAM" id="SSF52402">
    <property type="entry name" value="Adenine nucleotide alpha hydrolases-like"/>
    <property type="match status" value="1"/>
</dbReference>
<feature type="chain" id="PRO_0000246796" description="7-cyano-7-deazaguanine synthase">
    <location>
        <begin position="1"/>
        <end position="220"/>
    </location>
</feature>
<feature type="binding site" evidence="1">
    <location>
        <begin position="10"/>
        <end position="20"/>
    </location>
    <ligand>
        <name>ATP</name>
        <dbReference type="ChEBI" id="CHEBI:30616"/>
    </ligand>
</feature>
<feature type="binding site" evidence="1">
    <location>
        <position position="186"/>
    </location>
    <ligand>
        <name>Zn(2+)</name>
        <dbReference type="ChEBI" id="CHEBI:29105"/>
    </ligand>
</feature>
<feature type="binding site" evidence="1">
    <location>
        <position position="195"/>
    </location>
    <ligand>
        <name>Zn(2+)</name>
        <dbReference type="ChEBI" id="CHEBI:29105"/>
    </ligand>
</feature>
<feature type="binding site" evidence="1">
    <location>
        <position position="198"/>
    </location>
    <ligand>
        <name>Zn(2+)</name>
        <dbReference type="ChEBI" id="CHEBI:29105"/>
    </ligand>
</feature>
<feature type="binding site" evidence="1">
    <location>
        <position position="201"/>
    </location>
    <ligand>
        <name>Zn(2+)</name>
        <dbReference type="ChEBI" id="CHEBI:29105"/>
    </ligand>
</feature>
<comment type="function">
    <text evidence="1">Catalyzes the ATP-dependent conversion of 7-carboxy-7-deazaguanine (CDG) to 7-cyano-7-deazaguanine (preQ(0)).</text>
</comment>
<comment type="catalytic activity">
    <reaction evidence="1">
        <text>7-carboxy-7-deazaguanine + NH4(+) + ATP = 7-cyano-7-deazaguanine + ADP + phosphate + H2O + H(+)</text>
        <dbReference type="Rhea" id="RHEA:27982"/>
        <dbReference type="ChEBI" id="CHEBI:15377"/>
        <dbReference type="ChEBI" id="CHEBI:15378"/>
        <dbReference type="ChEBI" id="CHEBI:28938"/>
        <dbReference type="ChEBI" id="CHEBI:30616"/>
        <dbReference type="ChEBI" id="CHEBI:43474"/>
        <dbReference type="ChEBI" id="CHEBI:45075"/>
        <dbReference type="ChEBI" id="CHEBI:61036"/>
        <dbReference type="ChEBI" id="CHEBI:456216"/>
        <dbReference type="EC" id="6.3.4.20"/>
    </reaction>
</comment>
<comment type="cofactor">
    <cofactor evidence="1">
        <name>Zn(2+)</name>
        <dbReference type="ChEBI" id="CHEBI:29105"/>
    </cofactor>
    <text evidence="1">Binds 1 zinc ion per subunit.</text>
</comment>
<comment type="pathway">
    <text evidence="1">Purine metabolism; 7-cyano-7-deazaguanine biosynthesis.</text>
</comment>
<comment type="subunit">
    <text evidence="1">Homodimer.</text>
</comment>
<comment type="similarity">
    <text evidence="1">Belongs to the QueC family.</text>
</comment>
<proteinExistence type="inferred from homology"/>
<accession>Q81G69</accession>
<organism>
    <name type="scientific">Bacillus cereus (strain ATCC 14579 / DSM 31 / CCUG 7414 / JCM 2152 / NBRC 15305 / NCIMB 9373 / NCTC 2599 / NRRL B-3711)</name>
    <dbReference type="NCBI Taxonomy" id="226900"/>
    <lineage>
        <taxon>Bacteria</taxon>
        <taxon>Bacillati</taxon>
        <taxon>Bacillota</taxon>
        <taxon>Bacilli</taxon>
        <taxon>Bacillales</taxon>
        <taxon>Bacillaceae</taxon>
        <taxon>Bacillus</taxon>
        <taxon>Bacillus cereus group</taxon>
    </lineage>
</organism>